<comment type="function">
    <text>Can convert androstan-3-alpha,17-beta-diol (3-alpha-diol) to androsterone in vitro, suggesting that it may participate in androgen metabolism during steroidogenesis. May act by metabolizing compounds that stimulate steroid synthesis and/or by generating metabolites that inhibit it. Has no activity toward DHEA (dehydroepiandrosterone), or A-dione (4-androste-3,17-dione), and only a slight activity toward testosterone to A-dione. Tumor-associated antigen in cutaneous T-cell lymphoma.</text>
</comment>
<comment type="catalytic activity">
    <reaction evidence="6">
        <text>17beta-estradiol + NAD(+) = estrone + NADH + H(+)</text>
        <dbReference type="Rhea" id="RHEA:24612"/>
        <dbReference type="ChEBI" id="CHEBI:15378"/>
        <dbReference type="ChEBI" id="CHEBI:16469"/>
        <dbReference type="ChEBI" id="CHEBI:17263"/>
        <dbReference type="ChEBI" id="CHEBI:57540"/>
        <dbReference type="ChEBI" id="CHEBI:57945"/>
        <dbReference type="EC" id="1.1.1.62"/>
    </reaction>
</comment>
<comment type="catalytic activity">
    <reaction evidence="6">
        <text>17beta-estradiol + NADP(+) = estrone + NADPH + H(+)</text>
        <dbReference type="Rhea" id="RHEA:24616"/>
        <dbReference type="ChEBI" id="CHEBI:15378"/>
        <dbReference type="ChEBI" id="CHEBI:16469"/>
        <dbReference type="ChEBI" id="CHEBI:17263"/>
        <dbReference type="ChEBI" id="CHEBI:57783"/>
        <dbReference type="ChEBI" id="CHEBI:58349"/>
        <dbReference type="EC" id="1.1.1.62"/>
    </reaction>
</comment>
<comment type="interaction">
    <interactant intactId="EBI-1052304">
        <id>Q8NBQ5</id>
    </interactant>
    <interactant intactId="EBI-10827839">
        <id>Q15848</id>
        <label>ADIPOQ</label>
    </interactant>
    <organismsDiffer>false</organismsDiffer>
    <experiments>3</experiments>
</comment>
<comment type="interaction">
    <interactant intactId="EBI-1052304">
        <id>Q8NBQ5</id>
    </interactant>
    <interactant intactId="EBI-2803601">
        <id>Q9NRZ7</id>
        <label>AGPAT3</label>
    </interactant>
    <organismsDiffer>false</organismsDiffer>
    <experiments>3</experiments>
</comment>
<comment type="interaction">
    <interactant intactId="EBI-1052304">
        <id>Q8NBQ5</id>
    </interactant>
    <interactant intactId="EBI-1754287">
        <id>Q9NRZ5</id>
        <label>AGPAT4</label>
    </interactant>
    <organismsDiffer>false</organismsDiffer>
    <experiments>3</experiments>
</comment>
<comment type="interaction">
    <interactant intactId="EBI-1052304">
        <id>Q8NBQ5</id>
    </interactant>
    <interactant intactId="EBI-12109402">
        <id>Q86W74-2</id>
        <label>ANKRD46</label>
    </interactant>
    <organismsDiffer>false</organismsDiffer>
    <experiments>3</experiments>
</comment>
<comment type="interaction">
    <interactant intactId="EBI-1052304">
        <id>Q8NBQ5</id>
    </interactant>
    <interactant intactId="EBI-4402847">
        <id>Q12981</id>
        <label>BNIP1</label>
    </interactant>
    <organismsDiffer>false</organismsDiffer>
    <experiments>3</experiments>
</comment>
<comment type="interaction">
    <interactant intactId="EBI-1052304">
        <id>Q8NBQ5</id>
    </interactant>
    <interactant intactId="EBI-7247651">
        <id>Q96MX0</id>
        <label>CMTM3</label>
    </interactant>
    <organismsDiffer>false</organismsDiffer>
    <experiments>3</experiments>
</comment>
<comment type="interaction">
    <interactant intactId="EBI-1052304">
        <id>Q8NBQ5</id>
    </interactant>
    <interactant intactId="EBI-10267100">
        <id>Q8N6G5</id>
        <label>CSGALNACT2</label>
    </interactant>
    <organismsDiffer>false</organismsDiffer>
    <experiments>3</experiments>
</comment>
<comment type="interaction">
    <interactant intactId="EBI-1052304">
        <id>Q8NBQ5</id>
    </interactant>
    <interactant intactId="EBI-2680384">
        <id>Q9BQA9</id>
        <label>CYBC1</label>
    </interactant>
    <organismsDiffer>false</organismsDiffer>
    <experiments>3</experiments>
</comment>
<comment type="interaction">
    <interactant intactId="EBI-1052304">
        <id>Q8NBQ5</id>
    </interactant>
    <interactant intactId="EBI-12831978">
        <id>Q6ZPD8</id>
        <label>DGAT2L6</label>
    </interactant>
    <organismsDiffer>false</organismsDiffer>
    <experiments>3</experiments>
</comment>
<comment type="interaction">
    <interactant intactId="EBI-1052304">
        <id>Q8NBQ5</id>
    </interactant>
    <interactant intactId="EBI-3923585">
        <id>Q8N5I4</id>
        <label>DHRSX</label>
    </interactant>
    <organismsDiffer>false</organismsDiffer>
    <experiments>3</experiments>
</comment>
<comment type="interaction">
    <interactant intactId="EBI-1052304">
        <id>Q8NBQ5</id>
    </interactant>
    <interactant intactId="EBI-2339219">
        <id>Q08426</id>
        <label>EHHADH</label>
    </interactant>
    <organismsDiffer>false</organismsDiffer>
    <experiments>3</experiments>
</comment>
<comment type="interaction">
    <interactant intactId="EBI-1052304">
        <id>Q8NBQ5</id>
    </interactant>
    <interactant intactId="EBI-711490">
        <id>Q9UKR5</id>
        <label>ERG28</label>
    </interactant>
    <organismsDiffer>false</organismsDiffer>
    <experiments>3</experiments>
</comment>
<comment type="interaction">
    <interactant intactId="EBI-1052304">
        <id>Q8NBQ5</id>
    </interactant>
    <interactant intactId="EBI-12118888">
        <id>Q96D05-2</id>
        <label>FAM241B</label>
    </interactant>
    <organismsDiffer>false</organismsDiffer>
    <experiments>3</experiments>
</comment>
<comment type="interaction">
    <interactant intactId="EBI-1052304">
        <id>Q8NBQ5</id>
    </interactant>
    <interactant intactId="EBI-11991950">
        <id>Q8WWP7</id>
        <label>GIMAP1</label>
    </interactant>
    <organismsDiffer>false</organismsDiffer>
    <experiments>3</experiments>
</comment>
<comment type="interaction">
    <interactant intactId="EBI-1052304">
        <id>Q8NBQ5</id>
    </interactant>
    <interactant intactId="EBI-17231387">
        <id>Q6ZVE7</id>
        <label>GOLT1A</label>
    </interactant>
    <organismsDiffer>false</organismsDiffer>
    <experiments>3</experiments>
</comment>
<comment type="interaction">
    <interactant intactId="EBI-1052304">
        <id>Q8NBQ5</id>
    </interactant>
    <interactant intactId="EBI-12937691">
        <id>Q9BUP3-3</id>
        <label>HTATIP2</label>
    </interactant>
    <organismsDiffer>false</organismsDiffer>
    <experiments>3</experiments>
</comment>
<comment type="interaction">
    <interactant intactId="EBI-1052304">
        <id>Q8NBQ5</id>
    </interactant>
    <interactant intactId="EBI-12133176">
        <id>Q9UIQ6-2</id>
        <label>LNPEP</label>
    </interactant>
    <organismsDiffer>false</organismsDiffer>
    <experiments>3</experiments>
</comment>
<comment type="interaction">
    <interactant intactId="EBI-1052304">
        <id>Q8NBQ5</id>
    </interactant>
    <interactant intactId="EBI-718707">
        <id>O75427</id>
        <label>LRCH4</label>
    </interactant>
    <organismsDiffer>false</organismsDiffer>
    <experiments>3</experiments>
</comment>
<comment type="interaction">
    <interactant intactId="EBI-1052304">
        <id>Q8NBQ5</id>
    </interactant>
    <interactant intactId="EBI-2808234">
        <id>P11836</id>
        <label>MS4A1</label>
    </interactant>
    <organismsDiffer>false</organismsDiffer>
    <experiments>3</experiments>
</comment>
<comment type="interaction">
    <interactant intactId="EBI-1052304">
        <id>Q8NBQ5</id>
    </interactant>
    <interactant intactId="EBI-721517">
        <id>Q99519</id>
        <label>NEU1</label>
    </interactant>
    <organismsDiffer>false</organismsDiffer>
    <experiments>3</experiments>
</comment>
<comment type="interaction">
    <interactant intactId="EBI-1052304">
        <id>Q8NBQ5</id>
    </interactant>
    <interactant intactId="EBI-1054848">
        <id>Q9P0S3</id>
        <label>ORMDL1</label>
    </interactant>
    <organismsDiffer>false</organismsDiffer>
    <experiments>3</experiments>
</comment>
<comment type="interaction">
    <interactant intactId="EBI-1052304">
        <id>Q8NBQ5</id>
    </interactant>
    <interactant intactId="EBI-6916492">
        <id>Q9NUU6</id>
        <label>OTULINL</label>
    </interactant>
    <organismsDiffer>false</organismsDiffer>
    <experiments>3</experiments>
</comment>
<comment type="interaction">
    <interactant intactId="EBI-1052304">
        <id>Q8NBQ5</id>
    </interactant>
    <interactant intactId="EBI-608347">
        <id>Q04941</id>
        <label>PLP2</label>
    </interactant>
    <organismsDiffer>false</organismsDiffer>
    <experiments>3</experiments>
</comment>
<comment type="interaction">
    <interactant intactId="EBI-1052304">
        <id>Q8NBQ5</id>
    </interactant>
    <interactant intactId="EBI-2506064">
        <id>O60831</id>
        <label>PRAF2</label>
    </interactant>
    <organismsDiffer>false</organismsDiffer>
    <experiments>3</experiments>
</comment>
<comment type="interaction">
    <interactant intactId="EBI-1052304">
        <id>Q8NBQ5</id>
    </interactant>
    <interactant intactId="EBI-742898">
        <id>P43378</id>
        <label>PTPN9</label>
    </interactant>
    <organismsDiffer>false</organismsDiffer>
    <experiments>3</experiments>
</comment>
<comment type="interaction">
    <interactant intactId="EBI-1052304">
        <id>Q8NBQ5</id>
    </interactant>
    <interactant intactId="EBI-1047876">
        <id>Q8IV61</id>
        <label>RASGRP3</label>
    </interactant>
    <organismsDiffer>false</organismsDiffer>
    <experiments>3</experiments>
</comment>
<comment type="interaction">
    <interactant intactId="EBI-1052304">
        <id>Q8NBQ5</id>
    </interactant>
    <interactant intactId="EBI-2806908">
        <id>Q96LZ7</id>
        <label>RMDN2</label>
    </interactant>
    <organismsDiffer>false</organismsDiffer>
    <experiments>3</experiments>
</comment>
<comment type="interaction">
    <interactant intactId="EBI-1052304">
        <id>Q8NBQ5</id>
    </interactant>
    <interactant intactId="EBI-10244780">
        <id>Q5QGT7</id>
        <label>RTP2</label>
    </interactant>
    <organismsDiffer>false</organismsDiffer>
    <experiments>3</experiments>
</comment>
<comment type="interaction">
    <interactant intactId="EBI-1052304">
        <id>Q8NBQ5</id>
    </interactant>
    <interactant intactId="EBI-8652744">
        <id>Q96IW7</id>
        <label>SEC22A</label>
    </interactant>
    <organismsDiffer>false</organismsDiffer>
    <experiments>3</experiments>
</comment>
<comment type="interaction">
    <interactant intactId="EBI-1052304">
        <id>Q8NBQ5</id>
    </interactant>
    <interactant intactId="EBI-1058865">
        <id>O75396</id>
        <label>SEC22B</label>
    </interactant>
    <organismsDiffer>false</organismsDiffer>
    <experiments>3</experiments>
</comment>
<comment type="interaction">
    <interactant intactId="EBI-1052304">
        <id>Q8NBQ5</id>
    </interactant>
    <interactant intactId="EBI-953978">
        <id>P05121</id>
        <label>SERPINE1</label>
    </interactant>
    <organismsDiffer>false</organismsDiffer>
    <experiments>3</experiments>
</comment>
<comment type="interaction">
    <interactant intactId="EBI-1052304">
        <id>Q8NBQ5</id>
    </interactant>
    <interactant intactId="EBI-2854879">
        <id>Q6FHJ7</id>
        <label>SFRP4</label>
    </interactant>
    <organismsDiffer>false</organismsDiffer>
    <experiments>3</experiments>
</comment>
<comment type="interaction">
    <interactant intactId="EBI-1052304">
        <id>Q8NBQ5</id>
    </interactant>
    <interactant intactId="EBI-4402330">
        <id>O95562</id>
        <label>SFT2D2</label>
    </interactant>
    <organismsDiffer>false</organismsDiffer>
    <experiments>3</experiments>
</comment>
<comment type="interaction">
    <interactant intactId="EBI-1052304">
        <id>Q8NBQ5</id>
    </interactant>
    <interactant intactId="EBI-1171999">
        <id>Q9BWM7</id>
        <label>SFXN3</label>
    </interactant>
    <organismsDiffer>false</organismsDiffer>
    <experiments>3</experiments>
</comment>
<comment type="interaction">
    <interactant intactId="EBI-1052304">
        <id>Q8NBQ5</id>
    </interactant>
    <interactant intactId="EBI-11721845">
        <id>Q96BI1</id>
        <label>SLC22A18</label>
    </interactant>
    <organismsDiffer>false</organismsDiffer>
    <experiments>3</experiments>
</comment>
<comment type="interaction">
    <interactant intactId="EBI-1052304">
        <id>Q8NBQ5</id>
    </interactant>
    <interactant intactId="EBI-10281975">
        <id>Q96AG3</id>
        <label>SLC25A46</label>
    </interactant>
    <organismsDiffer>false</organismsDiffer>
    <experiments>3</experiments>
</comment>
<comment type="interaction">
    <interactant intactId="EBI-1052304">
        <id>Q8NBQ5</id>
    </interactant>
    <interactant intactId="EBI-10262251">
        <id>Q8IWU4</id>
        <label>SLC30A8</label>
    </interactant>
    <organismsDiffer>false</organismsDiffer>
    <experiments>3</experiments>
</comment>
<comment type="interaction">
    <interactant intactId="EBI-1052304">
        <id>Q8NBQ5</id>
    </interactant>
    <interactant intactId="EBI-12200293">
        <id>P0DN84</id>
        <label>STRIT1</label>
    </interactant>
    <organismsDiffer>false</organismsDiffer>
    <experiments>3</experiments>
</comment>
<comment type="interaction">
    <interactant intactId="EBI-1052304">
        <id>Q8NBQ5</id>
    </interactant>
    <interactant intactId="EBI-714206">
        <id>Q13190</id>
        <label>STX5</label>
    </interactant>
    <organismsDiffer>false</organismsDiffer>
    <experiments>3</experiments>
</comment>
<comment type="interaction">
    <interactant intactId="EBI-1052304">
        <id>Q8NBQ5</id>
    </interactant>
    <interactant intactId="EBI-3221827">
        <id>O15400</id>
        <label>STX7</label>
    </interactant>
    <organismsDiffer>false</organismsDiffer>
    <experiments>3</experiments>
</comment>
<comment type="interaction">
    <interactant intactId="EBI-1052304">
        <id>Q8NBQ5</id>
    </interactant>
    <interactant intactId="EBI-13075176">
        <id>Q8N2H4</id>
        <label>SYS1</label>
    </interactant>
    <organismsDiffer>false</organismsDiffer>
    <experiments>3</experiments>
</comment>
<comment type="interaction">
    <interactant intactId="EBI-1052304">
        <id>Q8NBQ5</id>
    </interactant>
    <interactant intactId="EBI-10171534">
        <id>A0PK00</id>
        <label>TMEM120B</label>
    </interactant>
    <organismsDiffer>false</organismsDiffer>
    <experiments>3</experiments>
</comment>
<comment type="interaction">
    <interactant intactId="EBI-1052304">
        <id>Q8NBQ5</id>
    </interactant>
    <interactant intactId="EBI-10694905">
        <id>Q5BJH2-2</id>
        <label>TMEM128</label>
    </interactant>
    <organismsDiffer>false</organismsDiffer>
    <experiments>3</experiments>
</comment>
<comment type="interaction">
    <interactant intactId="EBI-1052304">
        <id>Q8NBQ5</id>
    </interactant>
    <interactant intactId="EBI-8638294">
        <id>Q9NUH8</id>
        <label>TMEM14B</label>
    </interactant>
    <organismsDiffer>false</organismsDiffer>
    <experiments>3</experiments>
</comment>
<comment type="interaction">
    <interactant intactId="EBI-1052304">
        <id>Q8NBQ5</id>
    </interactant>
    <interactant intactId="EBI-17684533">
        <id>Q9NRX6</id>
        <label>TMEM167B</label>
    </interactant>
    <organismsDiffer>false</organismsDiffer>
    <experiments>3</experiments>
</comment>
<comment type="interaction">
    <interactant intactId="EBI-1052304">
        <id>Q8NBQ5</id>
    </interactant>
    <interactant intactId="EBI-12274070">
        <id>Q969S6</id>
        <label>TMEM203</label>
    </interactant>
    <organismsDiffer>false</organismsDiffer>
    <experiments>3</experiments>
</comment>
<comment type="interaction">
    <interactant intactId="EBI-1052304">
        <id>Q8NBQ5</id>
    </interactant>
    <interactant intactId="EBI-10315004">
        <id>Q9NWH2</id>
        <label>TMEM242</label>
    </interactant>
    <organismsDiffer>false</organismsDiffer>
    <experiments>3</experiments>
</comment>
<comment type="interaction">
    <interactant intactId="EBI-1052304">
        <id>Q8NBQ5</id>
    </interactant>
    <interactant intactId="EBI-12038591">
        <id>Q69YG0</id>
        <label>TMEM42</label>
    </interactant>
    <organismsDiffer>false</organismsDiffer>
    <experiments>3</experiments>
</comment>
<comment type="interaction">
    <interactant intactId="EBI-1052304">
        <id>Q8NBQ5</id>
    </interactant>
    <interactant intactId="EBI-2852148">
        <id>Q9H2L4</id>
        <label>TMEM60</label>
    </interactant>
    <organismsDiffer>false</organismsDiffer>
    <experiments>3</experiments>
</comment>
<comment type="interaction">
    <interactant intactId="EBI-1052304">
        <id>Q8NBQ5</id>
    </interactant>
    <interactant intactId="EBI-6656213">
        <id>Q6PI78</id>
        <label>TMEM65</label>
    </interactant>
    <organismsDiffer>false</organismsDiffer>
    <experiments>3</experiments>
</comment>
<comment type="interaction">
    <interactant intactId="EBI-1052304">
        <id>Q8NBQ5</id>
    </interactant>
    <interactant intactId="EBI-6447886">
        <id>Q9Y320</id>
        <label>TMX2</label>
    </interactant>
    <organismsDiffer>false</organismsDiffer>
    <experiments>3</experiments>
</comment>
<comment type="interaction">
    <interactant intactId="EBI-1052304">
        <id>Q8NBQ5</id>
    </interactant>
    <interactant intactId="EBI-17249488">
        <id>Q6ZUI0</id>
        <label>TPRG1</label>
    </interactant>
    <organismsDiffer>false</organismsDiffer>
    <experiments>3</experiments>
</comment>
<comment type="interaction">
    <interactant intactId="EBI-1052304">
        <id>Q8NBQ5</id>
    </interactant>
    <interactant intactId="EBI-10210710">
        <id>P49638</id>
        <label>TTPA</label>
    </interactant>
    <organismsDiffer>false</organismsDiffer>
    <experiments>3</experiments>
</comment>
<comment type="interaction">
    <interactant intactId="EBI-1052304">
        <id>Q8NBQ5</id>
    </interactant>
    <interactant intactId="EBI-11343401">
        <id>Q9NYZ1</id>
        <label>TVP23B</label>
    </interactant>
    <organismsDiffer>false</organismsDiffer>
    <experiments>3</experiments>
</comment>
<comment type="interaction">
    <interactant intactId="EBI-1052304">
        <id>Q8NBQ5</id>
    </interactant>
    <interactant intactId="EBI-7601760">
        <id>Q53HI1</id>
        <label>UNC50</label>
    </interactant>
    <organismsDiffer>false</organismsDiffer>
    <experiments>3</experiments>
</comment>
<comment type="interaction">
    <interactant intactId="EBI-1052304">
        <id>Q8NBQ5</id>
    </interactant>
    <interactant intactId="EBI-1059156">
        <id>Q9P0L0</id>
        <label>VAPA</label>
    </interactant>
    <organismsDiffer>false</organismsDiffer>
    <experiments>3</experiments>
</comment>
<comment type="interaction">
    <interactant intactId="EBI-1052304">
        <id>Q8NBQ5</id>
    </interactant>
    <interactant intactId="EBI-2799703">
        <id>O95070</id>
        <label>YIF1A</label>
    </interactant>
    <organismsDiffer>false</organismsDiffer>
    <experiments>3</experiments>
</comment>
<comment type="interaction">
    <interactant intactId="EBI-1052304">
        <id>Q8NBQ5</id>
    </interactant>
    <interactant intactId="EBI-751210">
        <id>Q96EC8</id>
        <label>YIPF6</label>
    </interactant>
    <organismsDiffer>false</organismsDiffer>
    <experiments>3</experiments>
</comment>
<comment type="interaction">
    <interactant intactId="EBI-1052304">
        <id>Q8NBQ5</id>
    </interactant>
    <interactant intactId="EBI-10254561">
        <id>Q6UX98</id>
        <label>ZDHHC24</label>
    </interactant>
    <organismsDiffer>false</organismsDiffer>
    <experiments>3</experiments>
</comment>
<comment type="subcellular location">
    <subcellularLocation>
        <location evidence="2">Endoplasmic reticulum</location>
    </subcellularLocation>
    <subcellularLocation>
        <location evidence="2">Lipid droplet</location>
    </subcellularLocation>
    <text evidence="2">Redistributed from the endoplasmic reticulum to lipids droplets in the cell upon induction of lipids droplet formation.</text>
</comment>
<comment type="tissue specificity">
    <text evidence="4 5 6 7">Present at high level in steroidogenic cells such as syncytiotrophoblasts, sebaceous gland, Leydig cells, and granulosa cells of the dominant follicle and corpus luteum. In lung, it is detected in the ciliated epithelium and in acini of adult trachea, in bronchioles, but not in alveoli. In the eye, it is detected in the nonpigmented epithelium of the ciliary body and, at lower level, in the inner nuclear layer of the retina (at protein level). Widely expressed. Highly expressed in retina, pancreas, kidney, liver, lung, adrenal, small intestine, ovary and heart.</text>
</comment>
<comment type="similarity">
    <text evidence="9">Belongs to the short-chain dehydrogenases/reductases (SDR) family. 17-beta-HSD 3 subfamily.</text>
</comment>
<evidence type="ECO:0000250" key="1"/>
<evidence type="ECO:0000250" key="2">
    <source>
        <dbReference type="UniProtKB" id="Q9EQ06"/>
    </source>
</evidence>
<evidence type="ECO:0000255" key="3"/>
<evidence type="ECO:0000269" key="4">
    <source>
    </source>
</evidence>
<evidence type="ECO:0000269" key="5">
    <source>
    </source>
</evidence>
<evidence type="ECO:0000269" key="6">
    <source>
    </source>
</evidence>
<evidence type="ECO:0000269" key="7">
    <source>
    </source>
</evidence>
<evidence type="ECO:0000303" key="8">
    <source>
    </source>
</evidence>
<evidence type="ECO:0000305" key="9"/>
<evidence type="ECO:0007829" key="10">
    <source>
        <dbReference type="PDB" id="1YB1"/>
    </source>
</evidence>
<reference key="1">
    <citation type="journal article" date="2000" name="Methods Enzymol.">
        <title>Short-chain dehydrogenases/reductases in retina.</title>
        <authorList>
            <person name="Haeseleer F."/>
            <person name="Palczewski K."/>
        </authorList>
    </citation>
    <scope>NUCLEOTIDE SEQUENCE [MRNA]</scope>
    <scope>TISSUE SPECIFICITY</scope>
    <source>
        <tissue>Retina</tissue>
    </source>
</reference>
<reference key="2">
    <citation type="journal article" date="2004" name="Br. J. Dermatol.">
        <title>SEREX identification of new tumour-associated antigens in cutaneous T-cell lymphoma.</title>
        <authorList>
            <person name="Hartmann T.B."/>
            <person name="Thiel D."/>
            <person name="Dummer R."/>
            <person name="Schadendorf D."/>
            <person name="Eichmueller S."/>
        </authorList>
    </citation>
    <scope>NUCLEOTIDE SEQUENCE [MRNA]</scope>
    <source>
        <tissue>Lymphoma</tissue>
    </source>
</reference>
<reference key="3">
    <citation type="journal article" date="2003" name="Genome Res.">
        <title>The secreted protein discovery initiative (SPDI), a large-scale effort to identify novel human secreted and transmembrane proteins: a bioinformatics assessment.</title>
        <authorList>
            <person name="Clark H.F."/>
            <person name="Gurney A.L."/>
            <person name="Abaya E."/>
            <person name="Baker K."/>
            <person name="Baldwin D.T."/>
            <person name="Brush J."/>
            <person name="Chen J."/>
            <person name="Chow B."/>
            <person name="Chui C."/>
            <person name="Crowley C."/>
            <person name="Currell B."/>
            <person name="Deuel B."/>
            <person name="Dowd P."/>
            <person name="Eaton D."/>
            <person name="Foster J.S."/>
            <person name="Grimaldi C."/>
            <person name="Gu Q."/>
            <person name="Hass P.E."/>
            <person name="Heldens S."/>
            <person name="Huang A."/>
            <person name="Kim H.S."/>
            <person name="Klimowski L."/>
            <person name="Jin Y."/>
            <person name="Johnson S."/>
            <person name="Lee J."/>
            <person name="Lewis L."/>
            <person name="Liao D."/>
            <person name="Mark M.R."/>
            <person name="Robbie E."/>
            <person name="Sanchez C."/>
            <person name="Schoenfeld J."/>
            <person name="Seshagiri S."/>
            <person name="Simmons L."/>
            <person name="Singh J."/>
            <person name="Smith V."/>
            <person name="Stinson J."/>
            <person name="Vagts A."/>
            <person name="Vandlen R.L."/>
            <person name="Watanabe C."/>
            <person name="Wieand D."/>
            <person name="Woods K."/>
            <person name="Xie M.-H."/>
            <person name="Yansura D.G."/>
            <person name="Yi S."/>
            <person name="Yu G."/>
            <person name="Yuan J."/>
            <person name="Zhang M."/>
            <person name="Zhang Z."/>
            <person name="Goddard A.D."/>
            <person name="Wood W.I."/>
            <person name="Godowski P.J."/>
            <person name="Gray A.M."/>
        </authorList>
    </citation>
    <scope>NUCLEOTIDE SEQUENCE [LARGE SCALE MRNA]</scope>
</reference>
<reference key="4">
    <citation type="journal article" date="2005" name="DNA Res.">
        <title>Signal sequence and keyword trap in silico for selection of full-length human cDNAs encoding secretion or membrane proteins from oligo-capped cDNA libraries.</title>
        <authorList>
            <person name="Otsuki T."/>
            <person name="Ota T."/>
            <person name="Nishikawa T."/>
            <person name="Hayashi K."/>
            <person name="Suzuki Y."/>
            <person name="Yamamoto J."/>
            <person name="Wakamatsu A."/>
            <person name="Kimura K."/>
            <person name="Sakamoto K."/>
            <person name="Hatano N."/>
            <person name="Kawai Y."/>
            <person name="Ishii S."/>
            <person name="Saito K."/>
            <person name="Kojima S."/>
            <person name="Sugiyama T."/>
            <person name="Ono T."/>
            <person name="Okano K."/>
            <person name="Yoshikawa Y."/>
            <person name="Aotsuka S."/>
            <person name="Sasaki N."/>
            <person name="Hattori A."/>
            <person name="Okumura K."/>
            <person name="Nagai K."/>
            <person name="Sugano S."/>
            <person name="Isogai T."/>
        </authorList>
    </citation>
    <scope>NUCLEOTIDE SEQUENCE [LARGE SCALE MRNA]</scope>
    <source>
        <tissue>Teratocarcinoma</tissue>
    </source>
</reference>
<reference key="5">
    <citation type="journal article" date="2005" name="Nature">
        <title>Generation and annotation of the DNA sequences of human chromosomes 2 and 4.</title>
        <authorList>
            <person name="Hillier L.W."/>
            <person name="Graves T.A."/>
            <person name="Fulton R.S."/>
            <person name="Fulton L.A."/>
            <person name="Pepin K.H."/>
            <person name="Minx P."/>
            <person name="Wagner-McPherson C."/>
            <person name="Layman D."/>
            <person name="Wylie K."/>
            <person name="Sekhon M."/>
            <person name="Becker M.C."/>
            <person name="Fewell G.A."/>
            <person name="Delehaunty K.D."/>
            <person name="Miner T.L."/>
            <person name="Nash W.E."/>
            <person name="Kremitzki C."/>
            <person name="Oddy L."/>
            <person name="Du H."/>
            <person name="Sun H."/>
            <person name="Bradshaw-Cordum H."/>
            <person name="Ali J."/>
            <person name="Carter J."/>
            <person name="Cordes M."/>
            <person name="Harris A."/>
            <person name="Isak A."/>
            <person name="van Brunt A."/>
            <person name="Nguyen C."/>
            <person name="Du F."/>
            <person name="Courtney L."/>
            <person name="Kalicki J."/>
            <person name="Ozersky P."/>
            <person name="Abbott S."/>
            <person name="Armstrong J."/>
            <person name="Belter E.A."/>
            <person name="Caruso L."/>
            <person name="Cedroni M."/>
            <person name="Cotton M."/>
            <person name="Davidson T."/>
            <person name="Desai A."/>
            <person name="Elliott G."/>
            <person name="Erb T."/>
            <person name="Fronick C."/>
            <person name="Gaige T."/>
            <person name="Haakenson W."/>
            <person name="Haglund K."/>
            <person name="Holmes A."/>
            <person name="Harkins R."/>
            <person name="Kim K."/>
            <person name="Kruchowski S.S."/>
            <person name="Strong C.M."/>
            <person name="Grewal N."/>
            <person name="Goyea E."/>
            <person name="Hou S."/>
            <person name="Levy A."/>
            <person name="Martinka S."/>
            <person name="Mead K."/>
            <person name="McLellan M.D."/>
            <person name="Meyer R."/>
            <person name="Randall-Maher J."/>
            <person name="Tomlinson C."/>
            <person name="Dauphin-Kohlberg S."/>
            <person name="Kozlowicz-Reilly A."/>
            <person name="Shah N."/>
            <person name="Swearengen-Shahid S."/>
            <person name="Snider J."/>
            <person name="Strong J.T."/>
            <person name="Thompson J."/>
            <person name="Yoakum M."/>
            <person name="Leonard S."/>
            <person name="Pearman C."/>
            <person name="Trani L."/>
            <person name="Radionenko M."/>
            <person name="Waligorski J.E."/>
            <person name="Wang C."/>
            <person name="Rock S.M."/>
            <person name="Tin-Wollam A.-M."/>
            <person name="Maupin R."/>
            <person name="Latreille P."/>
            <person name="Wendl M.C."/>
            <person name="Yang S.-P."/>
            <person name="Pohl C."/>
            <person name="Wallis J.W."/>
            <person name="Spieth J."/>
            <person name="Bieri T.A."/>
            <person name="Berkowicz N."/>
            <person name="Nelson J.O."/>
            <person name="Osborne J."/>
            <person name="Ding L."/>
            <person name="Meyer R."/>
            <person name="Sabo A."/>
            <person name="Shotland Y."/>
            <person name="Sinha P."/>
            <person name="Wohldmann P.E."/>
            <person name="Cook L.L."/>
            <person name="Hickenbotham M.T."/>
            <person name="Eldred J."/>
            <person name="Williams D."/>
            <person name="Jones T.A."/>
            <person name="She X."/>
            <person name="Ciccarelli F.D."/>
            <person name="Izaurralde E."/>
            <person name="Taylor J."/>
            <person name="Schmutz J."/>
            <person name="Myers R.M."/>
            <person name="Cox D.R."/>
            <person name="Huang X."/>
            <person name="McPherson J.D."/>
            <person name="Mardis E.R."/>
            <person name="Clifton S.W."/>
            <person name="Warren W.C."/>
            <person name="Chinwalla A.T."/>
            <person name="Eddy S.R."/>
            <person name="Marra M.A."/>
            <person name="Ovcharenko I."/>
            <person name="Furey T.S."/>
            <person name="Miller W."/>
            <person name="Eichler E.E."/>
            <person name="Bork P."/>
            <person name="Suyama M."/>
            <person name="Torrents D."/>
            <person name="Waterston R.H."/>
            <person name="Wilson R.K."/>
        </authorList>
    </citation>
    <scope>NUCLEOTIDE SEQUENCE [LARGE SCALE GENOMIC DNA]</scope>
</reference>
<reference key="6">
    <citation type="journal article" date="2004" name="Genome Res.">
        <title>The status, quality, and expansion of the NIH full-length cDNA project: the Mammalian Gene Collection (MGC).</title>
        <authorList>
            <consortium name="The MGC Project Team"/>
        </authorList>
    </citation>
    <scope>NUCLEOTIDE SEQUENCE [LARGE SCALE MRNA]</scope>
    <source>
        <tissue>Bone marrow</tissue>
        <tissue>Colon</tissue>
        <tissue>Kidney</tissue>
        <tissue>Liver</tissue>
        <tissue>Urinary bladder</tissue>
    </source>
</reference>
<reference key="7">
    <citation type="journal article" date="1998" name="Endocr. Res.">
        <title>Cloning and expression of a novel tissue specific 17beta-hydroxysteroid dehydrogenase.</title>
        <authorList>
            <person name="Li K.X.Z."/>
            <person name="Smith R.E."/>
            <person name="Krozowski Z.S."/>
        </authorList>
    </citation>
    <scope>TISSUE SPECIFICITY</scope>
</reference>
<reference key="8">
    <citation type="journal article" date="2001" name="Mol. Cell. Endocrinol.">
        <title>Pan1b (17betaHSD11)-enzymatic activity and distribution in the lung.</title>
        <authorList>
            <person name="Brereton P."/>
            <person name="Suzuki T."/>
            <person name="Sasano H."/>
            <person name="Li K."/>
            <person name="Duarte C."/>
            <person name="Obeyesekere V."/>
            <person name="Haeseleer F."/>
            <person name="Palczewski K."/>
            <person name="Smith I."/>
            <person name="Komesaroff P."/>
            <person name="Krozowski Z."/>
        </authorList>
    </citation>
    <scope>TISSUE SPECIFICITY</scope>
</reference>
<reference key="9">
    <citation type="journal article" date="2003" name="Endocrinology">
        <title>17 beta-hydroxysteroid dehydrogenase type XI localizes to human steroidogenic cells.</title>
        <authorList>
            <person name="Chai Z."/>
            <person name="Brereton P."/>
            <person name="Suzuki T."/>
            <person name="Sasano H."/>
            <person name="Obeyesekere V."/>
            <person name="Escher G."/>
            <person name="Saffery R."/>
            <person name="Fuller P."/>
            <person name="Enriquez C."/>
            <person name="Krozowski Z."/>
        </authorList>
    </citation>
    <scope>ENZYME ACTIVITY IN VITRO</scope>
    <scope>TISSUE SPECIFICITY</scope>
</reference>
<reference key="10">
    <citation type="journal article" date="2011" name="BMC Syst. Biol.">
        <title>Initial characterization of the human central proteome.</title>
        <authorList>
            <person name="Burkard T.R."/>
            <person name="Planyavsky M."/>
            <person name="Kaupe I."/>
            <person name="Breitwieser F.P."/>
            <person name="Buerckstuemmer T."/>
            <person name="Bennett K.L."/>
            <person name="Superti-Furga G."/>
            <person name="Colinge J."/>
        </authorList>
    </citation>
    <scope>IDENTIFICATION BY MASS SPECTROMETRY [LARGE SCALE ANALYSIS]</scope>
</reference>
<reference key="11">
    <citation type="journal article" date="2014" name="J. Proteomics">
        <title>An enzyme assisted RP-RPLC approach for in-depth analysis of human liver phosphoproteome.</title>
        <authorList>
            <person name="Bian Y."/>
            <person name="Song C."/>
            <person name="Cheng K."/>
            <person name="Dong M."/>
            <person name="Wang F."/>
            <person name="Huang J."/>
            <person name="Sun D."/>
            <person name="Wang L."/>
            <person name="Ye M."/>
            <person name="Zou H."/>
        </authorList>
    </citation>
    <scope>IDENTIFICATION BY MASS SPECTROMETRY [LARGE SCALE ANALYSIS]</scope>
    <source>
        <tissue>Liver</tissue>
    </source>
</reference>
<reference key="12">
    <citation type="submission" date="2004-12" db="PDB data bank">
        <title>Crystal structure of human 17-beta-hydroxysteroid dehydrogenase type XI.</title>
        <authorList>
            <person name="Lukacik P."/>
            <person name="Bunkoczi G."/>
            <person name="Kavanagh K."/>
            <person name="Ng S."/>
            <person name="Von delft F."/>
            <person name="Bray J."/>
            <person name="Edwards A."/>
            <person name="Arrowsmith C."/>
            <person name="Sundstrom M."/>
            <person name="Oppermann U."/>
        </authorList>
    </citation>
    <scope>X-RAY CRYSTALLOGRAPHY (1.95 ANGSTROMS) OF 28-275</scope>
</reference>
<feature type="signal peptide" evidence="3">
    <location>
        <begin position="1"/>
        <end position="19"/>
    </location>
</feature>
<feature type="chain" id="PRO_0000031970" description="Estradiol 17-beta-dehydrogenase 11">
    <location>
        <begin position="20"/>
        <end position="300"/>
    </location>
</feature>
<feature type="active site" description="Proton acceptor" evidence="1">
    <location>
        <position position="185"/>
    </location>
</feature>
<feature type="binding site" evidence="1">
    <location>
        <begin position="40"/>
        <end position="64"/>
    </location>
    <ligand>
        <name>NADP(+)</name>
        <dbReference type="ChEBI" id="CHEBI:58349"/>
    </ligand>
</feature>
<feature type="binding site" evidence="1">
    <location>
        <position position="172"/>
    </location>
    <ligand>
        <name>substrate</name>
    </ligand>
</feature>
<feature type="sequence conflict" description="In Ref. 6; AAH08650." evidence="9" ref="6">
    <original>V</original>
    <variation>E</variation>
    <location>
        <position position="23"/>
    </location>
</feature>
<feature type="sequence conflict" description="In Ref. 4; BAC11560." evidence="9" ref="4">
    <original>I</original>
    <variation>T</variation>
    <location>
        <position position="38"/>
    </location>
</feature>
<feature type="sequence conflict" description="In Ref. 6; AAH08650." evidence="9" ref="6">
    <original>K</original>
    <variation>N</variation>
    <location>
        <position position="106"/>
    </location>
</feature>
<feature type="sequence conflict" description="In Ref. 6; AAH08650." evidence="9" ref="6">
    <original>V</original>
    <variation>C</variation>
    <location>
        <position position="107"/>
    </location>
</feature>
<feature type="sequence conflict" description="In Ref. 6; AAH08650." evidence="9" ref="6">
    <original>N</original>
    <variation>K</variation>
    <location>
        <position position="228"/>
    </location>
</feature>
<feature type="sequence conflict" description="In Ref. 6; AAH08650." evidence="9" ref="6">
    <original>P</original>
    <variation>M</variation>
    <location>
        <position position="229"/>
    </location>
</feature>
<feature type="sequence conflict" description="In Ref. 6; AAH08650." evidence="9" ref="6">
    <original>I</original>
    <variation>N</variation>
    <location>
        <position position="263"/>
    </location>
</feature>
<feature type="sequence conflict" description="In Ref. 6; AAH08650." evidence="9" ref="6">
    <original>A</original>
    <variation>C</variation>
    <location>
        <position position="264"/>
    </location>
</feature>
<feature type="sequence conflict" description="In Ref. 6; AAH08650." evidence="9" ref="6">
    <original>F</original>
    <variation>I</variation>
    <location>
        <position position="265"/>
    </location>
</feature>
<feature type="strand" evidence="10">
    <location>
        <begin position="38"/>
        <end position="42"/>
    </location>
</feature>
<feature type="turn" evidence="10">
    <location>
        <begin position="43"/>
        <end position="45"/>
    </location>
</feature>
<feature type="helix" evidence="10">
    <location>
        <begin position="47"/>
        <end position="58"/>
    </location>
</feature>
<feature type="strand" evidence="10">
    <location>
        <begin position="62"/>
        <end position="68"/>
    </location>
</feature>
<feature type="helix" evidence="10">
    <location>
        <begin position="70"/>
        <end position="82"/>
    </location>
</feature>
<feature type="strand" evidence="10">
    <location>
        <begin position="87"/>
        <end position="91"/>
    </location>
</feature>
<feature type="helix" evidence="10">
    <location>
        <begin position="97"/>
        <end position="110"/>
    </location>
</feature>
<feature type="strand" evidence="10">
    <location>
        <begin position="115"/>
        <end position="119"/>
    </location>
</feature>
<feature type="helix" evidence="10">
    <location>
        <begin position="130"/>
        <end position="132"/>
    </location>
</feature>
<feature type="helix" evidence="10">
    <location>
        <begin position="133"/>
        <end position="144"/>
    </location>
</feature>
<feature type="helix" evidence="10">
    <location>
        <begin position="146"/>
        <end position="161"/>
    </location>
</feature>
<feature type="strand" evidence="10">
    <location>
        <begin position="165"/>
        <end position="170"/>
    </location>
</feature>
<feature type="helix" evidence="10">
    <location>
        <begin position="179"/>
        <end position="205"/>
    </location>
</feature>
<feature type="strand" evidence="10">
    <location>
        <begin position="211"/>
        <end position="218"/>
    </location>
</feature>
<feature type="helix" evidence="10">
    <location>
        <begin position="220"/>
        <end position="223"/>
    </location>
</feature>
<feature type="helix" evidence="10">
    <location>
        <begin position="230"/>
        <end position="233"/>
    </location>
</feature>
<feature type="helix" evidence="10">
    <location>
        <begin position="239"/>
        <end position="251"/>
    </location>
</feature>
<feature type="strand" evidence="10">
    <location>
        <begin position="255"/>
        <end position="259"/>
    </location>
</feature>
<feature type="helix" evidence="10">
    <location>
        <begin position="265"/>
        <end position="270"/>
    </location>
</feature>
<organism>
    <name type="scientific">Homo sapiens</name>
    <name type="common">Human</name>
    <dbReference type="NCBI Taxonomy" id="9606"/>
    <lineage>
        <taxon>Eukaryota</taxon>
        <taxon>Metazoa</taxon>
        <taxon>Chordata</taxon>
        <taxon>Craniata</taxon>
        <taxon>Vertebrata</taxon>
        <taxon>Euteleostomi</taxon>
        <taxon>Mammalia</taxon>
        <taxon>Eutheria</taxon>
        <taxon>Euarchontoglires</taxon>
        <taxon>Primates</taxon>
        <taxon>Haplorrhini</taxon>
        <taxon>Catarrhini</taxon>
        <taxon>Hominidae</taxon>
        <taxon>Homo</taxon>
    </lineage>
</organism>
<proteinExistence type="evidence at protein level"/>
<gene>
    <name type="primary">HSD17B11</name>
    <name type="synonym">DHRS8</name>
    <name type="synonym">PAN1B</name>
    <name type="synonym">SDR16C2</name>
    <name type="ORF">PSEC0029</name>
    <name type="ORF">UNQ207/PRO233</name>
</gene>
<keyword id="KW-0002">3D-structure</keyword>
<keyword id="KW-0256">Endoplasmic reticulum</keyword>
<keyword id="KW-0444">Lipid biosynthesis</keyword>
<keyword id="KW-0551">Lipid droplet</keyword>
<keyword id="KW-0443">Lipid metabolism</keyword>
<keyword id="KW-0521">NADP</keyword>
<keyword id="KW-0560">Oxidoreductase</keyword>
<keyword id="KW-1267">Proteomics identification</keyword>
<keyword id="KW-1185">Reference proteome</keyword>
<keyword id="KW-0732">Signal</keyword>
<keyword id="KW-0752">Steroid biosynthesis</keyword>
<dbReference type="EC" id="1.1.1.62"/>
<dbReference type="EMBL" id="AF126780">
    <property type="protein sequence ID" value="AAF06939.1"/>
    <property type="molecule type" value="mRNA"/>
</dbReference>
<dbReference type="EMBL" id="AF273056">
    <property type="protein sequence ID" value="AAM44459.1"/>
    <property type="molecule type" value="mRNA"/>
</dbReference>
<dbReference type="EMBL" id="AY358553">
    <property type="protein sequence ID" value="AAQ88917.1"/>
    <property type="molecule type" value="mRNA"/>
</dbReference>
<dbReference type="EMBL" id="AK075348">
    <property type="protein sequence ID" value="BAC11560.1"/>
    <property type="molecule type" value="mRNA"/>
</dbReference>
<dbReference type="EMBL" id="AC108516">
    <property type="status" value="NOT_ANNOTATED_CDS"/>
    <property type="molecule type" value="Genomic_DNA"/>
</dbReference>
<dbReference type="EMBL" id="BC008650">
    <property type="protein sequence ID" value="AAH08650.1"/>
    <property type="molecule type" value="mRNA"/>
</dbReference>
<dbReference type="EMBL" id="BC014327">
    <property type="protein sequence ID" value="AAH14327.1"/>
    <property type="molecule type" value="mRNA"/>
</dbReference>
<dbReference type="EMBL" id="BC016367">
    <property type="protein sequence ID" value="AAH16367.1"/>
    <property type="molecule type" value="mRNA"/>
</dbReference>
<dbReference type="EMBL" id="BC021673">
    <property type="protein sequence ID" value="AAH21673.1"/>
    <property type="molecule type" value="mRNA"/>
</dbReference>
<dbReference type="EMBL" id="BC036001">
    <property type="protein sequence ID" value="AAH36001.1"/>
    <property type="molecule type" value="mRNA"/>
</dbReference>
<dbReference type="CCDS" id="CCDS3619.1"/>
<dbReference type="RefSeq" id="NP_057329.3">
    <property type="nucleotide sequence ID" value="NM_016245.5"/>
</dbReference>
<dbReference type="PDB" id="1YB1">
    <property type="method" value="X-ray"/>
    <property type="resolution" value="1.95 A"/>
    <property type="chains" value="A/B=28-275"/>
</dbReference>
<dbReference type="PDBsum" id="1YB1"/>
<dbReference type="SMR" id="Q8NBQ5"/>
<dbReference type="BioGRID" id="119349">
    <property type="interactions" value="410"/>
</dbReference>
<dbReference type="FunCoup" id="Q8NBQ5">
    <property type="interactions" value="687"/>
</dbReference>
<dbReference type="IntAct" id="Q8NBQ5">
    <property type="interactions" value="88"/>
</dbReference>
<dbReference type="MINT" id="Q8NBQ5"/>
<dbReference type="STRING" id="9606.ENSP00000351035"/>
<dbReference type="BindingDB" id="Q8NBQ5"/>
<dbReference type="ChEMBL" id="CHEMBL5305043"/>
<dbReference type="DrugBank" id="DB02854">
    <property type="generic name" value="Aetiocholanolone"/>
</dbReference>
<dbReference type="GlyGen" id="Q8NBQ5">
    <property type="glycosylation" value="1 site, 1 O-linked glycan (1 site)"/>
</dbReference>
<dbReference type="iPTMnet" id="Q8NBQ5"/>
<dbReference type="PhosphoSitePlus" id="Q8NBQ5"/>
<dbReference type="SwissPalm" id="Q8NBQ5"/>
<dbReference type="BioMuta" id="HSD17B11"/>
<dbReference type="DMDM" id="296439374"/>
<dbReference type="jPOST" id="Q8NBQ5"/>
<dbReference type="MassIVE" id="Q8NBQ5"/>
<dbReference type="PaxDb" id="9606-ENSP00000351035"/>
<dbReference type="PeptideAtlas" id="Q8NBQ5"/>
<dbReference type="ProteomicsDB" id="72809"/>
<dbReference type="Pumba" id="Q8NBQ5"/>
<dbReference type="Antibodypedia" id="14449">
    <property type="antibodies" value="188 antibodies from 27 providers"/>
</dbReference>
<dbReference type="DNASU" id="51170"/>
<dbReference type="Ensembl" id="ENST00000358290.9">
    <property type="protein sequence ID" value="ENSP00000351035.4"/>
    <property type="gene ID" value="ENSG00000198189.11"/>
</dbReference>
<dbReference type="GeneID" id="51170"/>
<dbReference type="KEGG" id="hsa:51170"/>
<dbReference type="MANE-Select" id="ENST00000358290.9">
    <property type="protein sequence ID" value="ENSP00000351035.4"/>
    <property type="RefSeq nucleotide sequence ID" value="NM_016245.5"/>
    <property type="RefSeq protein sequence ID" value="NP_057329.3"/>
</dbReference>
<dbReference type="UCSC" id="uc003hqp.3">
    <property type="organism name" value="human"/>
</dbReference>
<dbReference type="AGR" id="HGNC:22960"/>
<dbReference type="CTD" id="51170"/>
<dbReference type="DisGeNET" id="51170"/>
<dbReference type="GeneCards" id="HSD17B11"/>
<dbReference type="HGNC" id="HGNC:22960">
    <property type="gene designation" value="HSD17B11"/>
</dbReference>
<dbReference type="HPA" id="ENSG00000198189">
    <property type="expression patterns" value="Tissue enhanced (intestine, liver)"/>
</dbReference>
<dbReference type="MIM" id="612831">
    <property type="type" value="gene"/>
</dbReference>
<dbReference type="neXtProt" id="NX_Q8NBQ5"/>
<dbReference type="OpenTargets" id="ENSG00000198189"/>
<dbReference type="PharmGKB" id="PA162391655"/>
<dbReference type="VEuPathDB" id="HostDB:ENSG00000198189"/>
<dbReference type="eggNOG" id="KOG1201">
    <property type="taxonomic scope" value="Eukaryota"/>
</dbReference>
<dbReference type="GeneTree" id="ENSGT00940000160856"/>
<dbReference type="HOGENOM" id="CLU_010194_2_5_1"/>
<dbReference type="InParanoid" id="Q8NBQ5"/>
<dbReference type="OMA" id="HYWLAQE"/>
<dbReference type="OrthoDB" id="10253736at2759"/>
<dbReference type="PAN-GO" id="Q8NBQ5">
    <property type="GO annotations" value="3 GO annotations based on evolutionary models"/>
</dbReference>
<dbReference type="PhylomeDB" id="Q8NBQ5"/>
<dbReference type="TreeFam" id="TF312837"/>
<dbReference type="PathwayCommons" id="Q8NBQ5"/>
<dbReference type="Reactome" id="R-HSA-193144">
    <property type="pathway name" value="Estrogen biosynthesis"/>
</dbReference>
<dbReference type="SignaLink" id="Q8NBQ5"/>
<dbReference type="SIGNOR" id="Q8NBQ5"/>
<dbReference type="BioGRID-ORCS" id="51170">
    <property type="hits" value="13 hits in 1155 CRISPR screens"/>
</dbReference>
<dbReference type="ChiTaRS" id="HSD17B11">
    <property type="organism name" value="human"/>
</dbReference>
<dbReference type="EvolutionaryTrace" id="Q8NBQ5"/>
<dbReference type="GeneWiki" id="HSD17B11"/>
<dbReference type="GenomeRNAi" id="51170"/>
<dbReference type="Pharos" id="Q8NBQ5">
    <property type="development level" value="Tbio"/>
</dbReference>
<dbReference type="PRO" id="PR:Q8NBQ5"/>
<dbReference type="Proteomes" id="UP000005640">
    <property type="component" value="Chromosome 4"/>
</dbReference>
<dbReference type="RNAct" id="Q8NBQ5">
    <property type="molecule type" value="protein"/>
</dbReference>
<dbReference type="Bgee" id="ENSG00000198189">
    <property type="expression patterns" value="Expressed in jejunal mucosa and 202 other cell types or tissues"/>
</dbReference>
<dbReference type="ExpressionAtlas" id="Q8NBQ5">
    <property type="expression patterns" value="baseline and differential"/>
</dbReference>
<dbReference type="GO" id="GO:0005737">
    <property type="term" value="C:cytoplasm"/>
    <property type="evidence" value="ECO:0000314"/>
    <property type="project" value="HGNC-UCL"/>
</dbReference>
<dbReference type="GO" id="GO:0005829">
    <property type="term" value="C:cytosol"/>
    <property type="evidence" value="ECO:0000304"/>
    <property type="project" value="Reactome"/>
</dbReference>
<dbReference type="GO" id="GO:0005783">
    <property type="term" value="C:endoplasmic reticulum"/>
    <property type="evidence" value="ECO:0007669"/>
    <property type="project" value="UniProtKB-SubCell"/>
</dbReference>
<dbReference type="GO" id="GO:0005811">
    <property type="term" value="C:lipid droplet"/>
    <property type="evidence" value="ECO:0000314"/>
    <property type="project" value="UniProtKB"/>
</dbReference>
<dbReference type="GO" id="GO:0004303">
    <property type="term" value="F:estradiol 17-beta-dehydrogenase [NAD(P)+] activity"/>
    <property type="evidence" value="ECO:0000314"/>
    <property type="project" value="FlyBase"/>
</dbReference>
<dbReference type="GO" id="GO:0016616">
    <property type="term" value="F:oxidoreductase activity, acting on the CH-OH group of donors, NAD or NADP as acceptor"/>
    <property type="evidence" value="ECO:0000318"/>
    <property type="project" value="GO_Central"/>
</dbReference>
<dbReference type="GO" id="GO:0016229">
    <property type="term" value="F:steroid dehydrogenase activity"/>
    <property type="evidence" value="ECO:0000314"/>
    <property type="project" value="HGNC-UCL"/>
</dbReference>
<dbReference type="GO" id="GO:0006710">
    <property type="term" value="P:androgen catabolic process"/>
    <property type="evidence" value="ECO:0000314"/>
    <property type="project" value="HGNC-UCL"/>
</dbReference>
<dbReference type="GO" id="GO:0006703">
    <property type="term" value="P:estrogen biosynthetic process"/>
    <property type="evidence" value="ECO:0000304"/>
    <property type="project" value="Reactome"/>
</dbReference>
<dbReference type="CDD" id="cd05339">
    <property type="entry name" value="17beta-HSDXI-like_SDR_c"/>
    <property type="match status" value="1"/>
</dbReference>
<dbReference type="FunFam" id="3.40.50.720:FF:000224">
    <property type="entry name" value="Hydroxysteroid 17-beta dehydrogenase 11"/>
    <property type="match status" value="1"/>
</dbReference>
<dbReference type="Gene3D" id="3.40.50.720">
    <property type="entry name" value="NAD(P)-binding Rossmann-like Domain"/>
    <property type="match status" value="1"/>
</dbReference>
<dbReference type="InterPro" id="IPR036291">
    <property type="entry name" value="NAD(P)-bd_dom_sf"/>
</dbReference>
<dbReference type="InterPro" id="IPR002347">
    <property type="entry name" value="SDR_fam"/>
</dbReference>
<dbReference type="PANTHER" id="PTHR24322:SF489">
    <property type="entry name" value="ESTRADIOL 17-BETA-DEHYDROGENASE 11"/>
    <property type="match status" value="1"/>
</dbReference>
<dbReference type="PANTHER" id="PTHR24322">
    <property type="entry name" value="PKSB"/>
    <property type="match status" value="1"/>
</dbReference>
<dbReference type="Pfam" id="PF00106">
    <property type="entry name" value="adh_short"/>
    <property type="match status" value="1"/>
</dbReference>
<dbReference type="PRINTS" id="PR00081">
    <property type="entry name" value="GDHRDH"/>
</dbReference>
<dbReference type="PRINTS" id="PR00080">
    <property type="entry name" value="SDRFAMILY"/>
</dbReference>
<dbReference type="SUPFAM" id="SSF51735">
    <property type="entry name" value="NAD(P)-binding Rossmann-fold domains"/>
    <property type="match status" value="1"/>
</dbReference>
<accession>Q8NBQ5</accession>
<accession>Q96HF6</accession>
<accession>Q9UKU4</accession>
<name>DHB11_HUMAN</name>
<protein>
    <recommendedName>
        <fullName>Estradiol 17-beta-dehydrogenase 11</fullName>
        <ecNumber>1.1.1.62</ecNumber>
    </recommendedName>
    <alternativeName>
        <fullName>17-beta-hydroxysteroid dehydrogenase 11</fullName>
        <shortName>17-beta-HSD 11</shortName>
        <shortName>17bHSD11</shortName>
        <shortName>17betaHSD11</shortName>
    </alternativeName>
    <alternativeName>
        <fullName>17-beta-hydroxysteroid dehydrogenase XI</fullName>
        <shortName>17-beta-HSD XI</shortName>
        <shortName evidence="8">17betaHSDXI</shortName>
    </alternativeName>
    <alternativeName>
        <fullName>Cutaneous T-cell lymphoma-associated antigen HD-CL-03</fullName>
        <shortName>CTCL-associated antigen HD-CL-03</shortName>
    </alternativeName>
    <alternativeName>
        <fullName>Dehydrogenase/reductase SDR family member 8</fullName>
    </alternativeName>
    <alternativeName>
        <fullName>Retinal short-chain dehydrogenase/reductase 2</fullName>
        <shortName>retSDR2</shortName>
    </alternativeName>
    <alternativeName>
        <fullName>Short chain dehydrogenase/reductase family 16C member 2</fullName>
    </alternativeName>
</protein>
<sequence length="300" mass="32964">MKFLLDILLLLPLLIVCSLESFVKLFIPKRRKSVTGEIVLITGAGHGIGRLTAYEFAKLKSKLVLWDINKHGLEETAAKCKGLGAKVHTFVVDCSNREDIYSSAKKVKAEIGDVSILVNNAGVVYTSDLFATQDPQIEKTFEVNVLAHFWTTKAFLPAMTKNNHGHIVTVASAAGHVSVPFLLAYCSSKFAAVGFHKTLTDELAALQITGVKTTCLCPNFVNTGFIKNPSTSLGPTLEPEEVVNRLMHGILTEQKMIFIPSSIAFLTTLERILPERFLAVLKRKISVKFDAVIGYKMKAQ</sequence>